<organism>
    <name type="scientific">Streptococcus dysgalactiae subsp. equisimilis</name>
    <name type="common">Streptococcus equisimilis</name>
    <dbReference type="NCBI Taxonomy" id="119602"/>
    <lineage>
        <taxon>Bacteria</taxon>
        <taxon>Bacillati</taxon>
        <taxon>Bacillota</taxon>
        <taxon>Bacilli</taxon>
        <taxon>Lactobacillales</taxon>
        <taxon>Streptococcaceae</taxon>
        <taxon>Streptococcus</taxon>
    </lineage>
</organism>
<proteinExistence type="inferred from homology"/>
<protein>
    <recommendedName>
        <fullName>Glucan 1,6-alpha-glucosidase</fullName>
        <ecNumber>3.2.1.70</ecNumber>
    </recommendedName>
    <alternativeName>
        <fullName>Dextran glucosidase</fullName>
    </alternativeName>
    <alternativeName>
        <fullName>Exo-1,6-alpha-glucosidase</fullName>
    </alternativeName>
    <alternativeName>
        <fullName>Glucodextranase</fullName>
    </alternativeName>
</protein>
<gene>
    <name type="primary">dexB</name>
</gene>
<name>DEXB_STREQ</name>
<reference key="1">
    <citation type="journal article" date="1993" name="Mol. Gen. Genet.">
        <title>Genetic organization of the streptokinase region of the Streptococcus equisimilis H46A chromosome.</title>
        <authorList>
            <person name="Mechold U."/>
            <person name="Steiner K."/>
            <person name="Vettermann S."/>
            <person name="Malke H."/>
        </authorList>
    </citation>
    <scope>NUCLEOTIDE SEQUENCE [GENOMIC DNA]</scope>
    <source>
        <strain>H46A</strain>
    </source>
</reference>
<dbReference type="EC" id="3.2.1.70"/>
<dbReference type="EMBL" id="X72832">
    <property type="protein sequence ID" value="CAA51348.1"/>
    <property type="molecule type" value="Genomic_DNA"/>
</dbReference>
<dbReference type="PIR" id="S39970">
    <property type="entry name" value="S39970"/>
</dbReference>
<dbReference type="SMR" id="Q59905"/>
<dbReference type="CAZy" id="GH13">
    <property type="family name" value="Glycoside Hydrolase Family 13"/>
</dbReference>
<dbReference type="GO" id="GO:0005737">
    <property type="term" value="C:cytoplasm"/>
    <property type="evidence" value="ECO:0007669"/>
    <property type="project" value="UniProtKB-SubCell"/>
</dbReference>
<dbReference type="GO" id="GO:0004556">
    <property type="term" value="F:alpha-amylase activity"/>
    <property type="evidence" value="ECO:0007669"/>
    <property type="project" value="TreeGrafter"/>
</dbReference>
<dbReference type="GO" id="GO:0043896">
    <property type="term" value="F:glucan 1,6-alpha-glucosidase activity"/>
    <property type="evidence" value="ECO:0007669"/>
    <property type="project" value="UniProtKB-EC"/>
</dbReference>
<dbReference type="GO" id="GO:0009313">
    <property type="term" value="P:oligosaccharide catabolic process"/>
    <property type="evidence" value="ECO:0007669"/>
    <property type="project" value="TreeGrafter"/>
</dbReference>
<dbReference type="CDD" id="cd11333">
    <property type="entry name" value="AmyAc_SI_OligoGlu_DGase"/>
    <property type="match status" value="1"/>
</dbReference>
<dbReference type="FunFam" id="3.20.20.80:FF:000064">
    <property type="entry name" value="Oligo-1,6-glucosidase"/>
    <property type="match status" value="1"/>
</dbReference>
<dbReference type="FunFam" id="3.90.400.10:FF:000002">
    <property type="entry name" value="Sucrose isomerase"/>
    <property type="match status" value="1"/>
</dbReference>
<dbReference type="Gene3D" id="3.20.20.80">
    <property type="entry name" value="Glycosidases"/>
    <property type="match status" value="1"/>
</dbReference>
<dbReference type="Gene3D" id="2.60.40.1180">
    <property type="entry name" value="Golgi alpha-mannosidase II"/>
    <property type="match status" value="1"/>
</dbReference>
<dbReference type="Gene3D" id="3.90.400.10">
    <property type="entry name" value="Oligo-1,6-glucosidase, Domain 2"/>
    <property type="match status" value="1"/>
</dbReference>
<dbReference type="InterPro" id="IPR022567">
    <property type="entry name" value="DUF3459"/>
</dbReference>
<dbReference type="InterPro" id="IPR006047">
    <property type="entry name" value="Glyco_hydro_13_cat_dom"/>
</dbReference>
<dbReference type="InterPro" id="IPR013780">
    <property type="entry name" value="Glyco_hydro_b"/>
</dbReference>
<dbReference type="InterPro" id="IPR017853">
    <property type="entry name" value="Glycoside_hydrolase_SF"/>
</dbReference>
<dbReference type="InterPro" id="IPR045857">
    <property type="entry name" value="O16G_dom_2"/>
</dbReference>
<dbReference type="NCBIfam" id="NF008183">
    <property type="entry name" value="PRK10933.1"/>
    <property type="match status" value="1"/>
</dbReference>
<dbReference type="PANTHER" id="PTHR10357">
    <property type="entry name" value="ALPHA-AMYLASE FAMILY MEMBER"/>
    <property type="match status" value="1"/>
</dbReference>
<dbReference type="PANTHER" id="PTHR10357:SF179">
    <property type="entry name" value="NEUTRAL AND BASIC AMINO ACID TRANSPORT PROTEIN RBAT"/>
    <property type="match status" value="1"/>
</dbReference>
<dbReference type="Pfam" id="PF00128">
    <property type="entry name" value="Alpha-amylase"/>
    <property type="match status" value="1"/>
</dbReference>
<dbReference type="Pfam" id="PF11941">
    <property type="entry name" value="DUF3459"/>
    <property type="match status" value="1"/>
</dbReference>
<dbReference type="SMART" id="SM00642">
    <property type="entry name" value="Aamy"/>
    <property type="match status" value="1"/>
</dbReference>
<dbReference type="SUPFAM" id="SSF51445">
    <property type="entry name" value="(Trans)glycosidases"/>
    <property type="match status" value="1"/>
</dbReference>
<dbReference type="SUPFAM" id="SSF51011">
    <property type="entry name" value="Glycosyl hydrolase domain"/>
    <property type="match status" value="1"/>
</dbReference>
<accession>Q59905</accession>
<feature type="chain" id="PRO_0000054338" description="Glucan 1,6-alpha-glucosidase">
    <location>
        <begin position="1"/>
        <end position="537"/>
    </location>
</feature>
<feature type="active site" description="Nucleophile" evidence="1">
    <location>
        <position position="194"/>
    </location>
</feature>
<feature type="active site" description="Proton donor" evidence="1">
    <location>
        <position position="236"/>
    </location>
</feature>
<feature type="site" description="Transition state stabilizer" evidence="1">
    <location>
        <position position="313"/>
    </location>
</feature>
<sequence length="537" mass="61733">MQKQWWHKATIYQIYPRSFKDTSGNGIGDLKGITSQLDYLQKLGITAIWLSPVYQSPMDDNGYDISDYEAIAEVFGNMDDMDDLLAAANERGIKIIMDLVVNHTSDEHAWFVEARENPNSPERDYYIWRDEPNNLMSIFSGSAWELDEASGQYYLHLFSKKQPDLNWENAHVRQKIYDMMNFWIAKGIGGFRMDVIDLIGKIPDSEITGNGPRLHDYLKEMNQATFGNHDVMTVGETWGATPEIARQYSRPENKELSMVFQFEHVGLQHKPNAPKWDYAEELDVPALKTIFSKWQTELKLGEGWNSLFWNNHDLPRVLSIWGNDSIYREKSAKALAILLHLMRGTPYIYQGEEIGMTNYPFKDLTEVDDIESLNYAKEAMENGVPAARVMSSIRKVGRDNARTPMQWSKDTHAGFSEAQETWLPVNPNYQEINVADALANQDSIFYTYQQLIALRKDQDWLVEADYHLLPTADKVFAYQRQFGEETYVIVVNVSDQEQVFAKDLAGAEVVITNTDVDKVLETKHLQPWDAFCVKLSV</sequence>
<evidence type="ECO:0000250" key="1"/>
<evidence type="ECO:0000305" key="2"/>
<keyword id="KW-0963">Cytoplasm</keyword>
<keyword id="KW-0326">Glycosidase</keyword>
<keyword id="KW-0378">Hydrolase</keyword>
<comment type="function">
    <text evidence="1">The physiological substrates may be short isomaltosaccharides.</text>
</comment>
<comment type="catalytic activity">
    <reaction>
        <text>Hydrolysis of (1-&gt;6)-alpha-D-glucosidic linkages in (1-&gt;6)-alpha-D-glucans and derived oligosaccharides.</text>
        <dbReference type="EC" id="3.2.1.70"/>
    </reaction>
</comment>
<comment type="subcellular location">
    <subcellularLocation>
        <location evidence="1">Cytoplasm</location>
    </subcellularLocation>
</comment>
<comment type="similarity">
    <text evidence="2">Belongs to the glycosyl hydrolase 13 family.</text>
</comment>